<feature type="chain" id="PRO_0000159034" description="Sulfur carrier protein TusA">
    <location>
        <begin position="1"/>
        <end position="81"/>
    </location>
</feature>
<feature type="active site" description="Cysteine persulfide intermediate" evidence="1">
    <location>
        <position position="19"/>
    </location>
</feature>
<feature type="mutagenesis site" description="Decreased binding of IscS." evidence="2">
    <original>E</original>
    <variation>A</variation>
    <location>
        <position position="21"/>
    </location>
</feature>
<feature type="mutagenesis site" description="No binding of IscS, 50% modified tRNA produced." evidence="2">
    <original>M</original>
    <variation>R</variation>
    <location>
        <position position="24"/>
    </location>
</feature>
<feature type="mutagenesis site" description="No modified tRNA produced." evidence="2">
    <original>RKTVRNMQP</original>
    <variation>DKTVRNMQS</variation>
    <location>
        <begin position="27"/>
        <end position="35"/>
    </location>
</feature>
<feature type="mutagenesis site" description="No binding of IscS, 19% modified tRNA produced (for R27E)." evidence="2">
    <original>R</original>
    <variation>D</variation>
    <variation>E</variation>
    <location>
        <position position="27"/>
    </location>
</feature>
<feature type="mutagenesis site" description="No binding of IscS, 30% modified tRNA produced." evidence="2">
    <original>R</original>
    <variation>A</variation>
    <location>
        <position position="31"/>
    </location>
</feature>
<feature type="mutagenesis site" description="Binds IscS, 56% modified tRNA produced." evidence="2">
    <original>D</original>
    <variation>A</variation>
    <location>
        <position position="45"/>
    </location>
</feature>
<feature type="mutagenesis site" description="Binds IscS, 67% modified tRNA produced." evidence="2">
    <original>R</original>
    <variation>A</variation>
    <location>
        <position position="50"/>
    </location>
</feature>
<feature type="mutagenesis site" description="Binds IscS, 67% modified tRNA produced." evidence="2">
    <original>D</original>
    <variation>A</variation>
    <location>
        <position position="51"/>
    </location>
</feature>
<feature type="mutagenesis site" description="No binding of IscS, 67% modified tRNA produced." evidence="2">
    <original>F</original>
    <variation>A</variation>
    <location>
        <position position="58"/>
    </location>
</feature>
<feature type="strand" evidence="4">
    <location>
        <begin position="9"/>
        <end position="13"/>
    </location>
</feature>
<feature type="helix" evidence="4">
    <location>
        <begin position="21"/>
        <end position="31"/>
    </location>
</feature>
<feature type="strand" evidence="4">
    <location>
        <begin position="38"/>
        <end position="43"/>
    </location>
</feature>
<feature type="helix" evidence="4">
    <location>
        <begin position="48"/>
        <end position="58"/>
    </location>
</feature>
<feature type="strand" evidence="4">
    <location>
        <begin position="62"/>
        <end position="67"/>
    </location>
</feature>
<feature type="strand" evidence="4">
    <location>
        <begin position="69"/>
        <end position="78"/>
    </location>
</feature>
<dbReference type="EMBL" id="AE005174">
    <property type="protein sequence ID" value="AAG58579.1"/>
    <property type="molecule type" value="Genomic_DNA"/>
</dbReference>
<dbReference type="EMBL" id="BA000007">
    <property type="protein sequence ID" value="BAB37742.1"/>
    <property type="molecule type" value="Genomic_DNA"/>
</dbReference>
<dbReference type="PIR" id="G86014">
    <property type="entry name" value="G86014"/>
</dbReference>
<dbReference type="PIR" id="G91168">
    <property type="entry name" value="G91168"/>
</dbReference>
<dbReference type="RefSeq" id="NP_312346.1">
    <property type="nucleotide sequence ID" value="NC_002695.1"/>
</dbReference>
<dbReference type="RefSeq" id="WP_000130621.1">
    <property type="nucleotide sequence ID" value="NZ_VOAI01000004.1"/>
</dbReference>
<dbReference type="PDB" id="3LVJ">
    <property type="method" value="X-ray"/>
    <property type="resolution" value="2.44 A"/>
    <property type="chains" value="C/D=2-81"/>
</dbReference>
<dbReference type="PDB" id="3LVK">
    <property type="method" value="X-ray"/>
    <property type="resolution" value="2.44 A"/>
    <property type="chains" value="B=2-81"/>
</dbReference>
<dbReference type="PDBsum" id="3LVJ"/>
<dbReference type="PDBsum" id="3LVK"/>
<dbReference type="SMR" id="P0A892"/>
<dbReference type="DIP" id="DIP-58574N"/>
<dbReference type="IntAct" id="P0A892">
    <property type="interactions" value="1"/>
</dbReference>
<dbReference type="STRING" id="155864.Z4844"/>
<dbReference type="GeneID" id="915823"/>
<dbReference type="GeneID" id="93778521"/>
<dbReference type="KEGG" id="ece:Z4844"/>
<dbReference type="KEGG" id="ecs:ECs_4319"/>
<dbReference type="PATRIC" id="fig|386585.9.peg.4512"/>
<dbReference type="eggNOG" id="COG0425">
    <property type="taxonomic scope" value="Bacteria"/>
</dbReference>
<dbReference type="HOGENOM" id="CLU_165255_5_0_6"/>
<dbReference type="OMA" id="FCQFLGH"/>
<dbReference type="EvolutionaryTrace" id="P0A892"/>
<dbReference type="Proteomes" id="UP000000558">
    <property type="component" value="Chromosome"/>
</dbReference>
<dbReference type="Proteomes" id="UP000002519">
    <property type="component" value="Chromosome"/>
</dbReference>
<dbReference type="GO" id="GO:0005737">
    <property type="term" value="C:cytoplasm"/>
    <property type="evidence" value="ECO:0007669"/>
    <property type="project" value="UniProtKB-SubCell"/>
</dbReference>
<dbReference type="GO" id="GO:0097163">
    <property type="term" value="F:sulfur carrier activity"/>
    <property type="evidence" value="ECO:0007669"/>
    <property type="project" value="UniProtKB-UniRule"/>
</dbReference>
<dbReference type="GO" id="GO:0002143">
    <property type="term" value="P:tRNA wobble position uridine thiolation"/>
    <property type="evidence" value="ECO:0007669"/>
    <property type="project" value="InterPro"/>
</dbReference>
<dbReference type="CDD" id="cd03423">
    <property type="entry name" value="SirA"/>
    <property type="match status" value="1"/>
</dbReference>
<dbReference type="FunFam" id="3.30.110.40:FF:000002">
    <property type="entry name" value="Sulfur carrier protein TusA"/>
    <property type="match status" value="1"/>
</dbReference>
<dbReference type="Gene3D" id="3.30.110.40">
    <property type="entry name" value="TusA-like domain"/>
    <property type="match status" value="1"/>
</dbReference>
<dbReference type="HAMAP" id="MF_00413">
    <property type="entry name" value="Thiourid_synth_A"/>
    <property type="match status" value="1"/>
</dbReference>
<dbReference type="InterPro" id="IPR022931">
    <property type="entry name" value="Sulphur_carrier_TusA"/>
</dbReference>
<dbReference type="InterPro" id="IPR001455">
    <property type="entry name" value="TusA-like"/>
</dbReference>
<dbReference type="InterPro" id="IPR036868">
    <property type="entry name" value="TusA-like_sf"/>
</dbReference>
<dbReference type="NCBIfam" id="NF001423">
    <property type="entry name" value="PRK00299.1"/>
    <property type="match status" value="1"/>
</dbReference>
<dbReference type="PANTHER" id="PTHR33279:SF2">
    <property type="entry name" value="SULFUR CARRIER PROTEIN TUSA"/>
    <property type="match status" value="1"/>
</dbReference>
<dbReference type="PANTHER" id="PTHR33279">
    <property type="entry name" value="SULFUR CARRIER PROTEIN YEDF-RELATED"/>
    <property type="match status" value="1"/>
</dbReference>
<dbReference type="Pfam" id="PF01206">
    <property type="entry name" value="TusA"/>
    <property type="match status" value="1"/>
</dbReference>
<dbReference type="SUPFAM" id="SSF64307">
    <property type="entry name" value="SirA-like"/>
    <property type="match status" value="1"/>
</dbReference>
<dbReference type="PROSITE" id="PS01148">
    <property type="entry name" value="UPF0033"/>
    <property type="match status" value="1"/>
</dbReference>
<reference key="1">
    <citation type="journal article" date="2001" name="Nature">
        <title>Genome sequence of enterohaemorrhagic Escherichia coli O157:H7.</title>
        <authorList>
            <person name="Perna N.T."/>
            <person name="Plunkett G. III"/>
            <person name="Burland V."/>
            <person name="Mau B."/>
            <person name="Glasner J.D."/>
            <person name="Rose D.J."/>
            <person name="Mayhew G.F."/>
            <person name="Evans P.S."/>
            <person name="Gregor J."/>
            <person name="Kirkpatrick H.A."/>
            <person name="Posfai G."/>
            <person name="Hackett J."/>
            <person name="Klink S."/>
            <person name="Boutin A."/>
            <person name="Shao Y."/>
            <person name="Miller L."/>
            <person name="Grotbeck E.J."/>
            <person name="Davis N.W."/>
            <person name="Lim A."/>
            <person name="Dimalanta E.T."/>
            <person name="Potamousis K."/>
            <person name="Apodaca J."/>
            <person name="Anantharaman T.S."/>
            <person name="Lin J."/>
            <person name="Yen G."/>
            <person name="Schwartz D.C."/>
            <person name="Welch R.A."/>
            <person name="Blattner F.R."/>
        </authorList>
    </citation>
    <scope>NUCLEOTIDE SEQUENCE [LARGE SCALE GENOMIC DNA]</scope>
    <source>
        <strain>O157:H7 / EDL933 / ATCC 700927 / EHEC</strain>
    </source>
</reference>
<reference key="2">
    <citation type="journal article" date="2001" name="DNA Res.">
        <title>Complete genome sequence of enterohemorrhagic Escherichia coli O157:H7 and genomic comparison with a laboratory strain K-12.</title>
        <authorList>
            <person name="Hayashi T."/>
            <person name="Makino K."/>
            <person name="Ohnishi M."/>
            <person name="Kurokawa K."/>
            <person name="Ishii K."/>
            <person name="Yokoyama K."/>
            <person name="Han C.-G."/>
            <person name="Ohtsubo E."/>
            <person name="Nakayama K."/>
            <person name="Murata T."/>
            <person name="Tanaka M."/>
            <person name="Tobe T."/>
            <person name="Iida T."/>
            <person name="Takami H."/>
            <person name="Honda T."/>
            <person name="Sasakawa C."/>
            <person name="Ogasawara N."/>
            <person name="Yasunaga T."/>
            <person name="Kuhara S."/>
            <person name="Shiba T."/>
            <person name="Hattori M."/>
            <person name="Shinagawa H."/>
        </authorList>
    </citation>
    <scope>NUCLEOTIDE SEQUENCE [LARGE SCALE GENOMIC DNA]</scope>
    <source>
        <strain>O157:H7 / Sakai / RIMD 0509952 / EHEC</strain>
    </source>
</reference>
<reference key="3">
    <citation type="journal article" date="2010" name="PLoS Biol.">
        <title>Structural basis for Fe-S cluster assembly and tRNA thiolation mediated by IscS protein-protein interactions.</title>
        <authorList>
            <person name="Shi R."/>
            <person name="Proteau A."/>
            <person name="Villarroya M."/>
            <person name="Moukadiri I."/>
            <person name="Zhang L."/>
            <person name="Trempe J.F."/>
            <person name="Matte A."/>
            <person name="Armengod M.E."/>
            <person name="Cygler M."/>
        </authorList>
    </citation>
    <scope>X-RAY CRYSTALLOGRAPHY (2.44 ANGSTROMS) IN COMPLEX WITH ISCS</scope>
    <scope>FUNCTION</scope>
    <scope>INTERACTION WITH ISCS</scope>
    <scope>SUBUNIT</scope>
    <scope>MUTAGENESIS OF GLU-21; MET-24; 27-ARG--PRO-35; ARG-27; ARG-31; ASP-45; ARG-50; ASP-51 AND PHE-58</scope>
    <source>
        <strain>O157:H7 / EDL933 / ATCC 700927 / EHEC</strain>
    </source>
</reference>
<comment type="function">
    <text evidence="1 3">Sulfur carrier protein involved in sulfur trafficking in the cell. Part of a sulfur-relay system required for 2-thiolation during synthesis of 2-thiouridine of the modified wobble base 5-methylaminomethyl-2-thiouridine (mnm(5)s(2)U) in tRNA. Interacts with IscS and stimulates its cysteine desulfurase activity. Accepts an activated sulfur from IscS, which is then transferred to TusD, and thus determines the direction of sulfur flow from IscS to 2-thiouridine formation. Also appears to be involved in sulfur transfer for the biosynthesis of molybdopterin.</text>
</comment>
<comment type="pathway">
    <text evidence="1">tRNA modification.</text>
</comment>
<comment type="subunit">
    <text evidence="2">Forms a heterotetramer with IscS. Certain pairs of proteins can bind simultaneously to IscS but TusA does not seem to be one of them. IscU can displace TusA from IscS.</text>
</comment>
<comment type="interaction">
    <interactant intactId="EBI-15849930">
        <id>P0A892</id>
    </interactant>
    <interactant intactId="EBI-9011195">
        <id>P0A6B9</id>
        <label>iscS</label>
    </interactant>
    <organismsDiffer>false</organismsDiffer>
    <experiments>5</experiments>
</comment>
<comment type="subcellular location">
    <subcellularLocation>
        <location evidence="1">Cytoplasm</location>
    </subcellularLocation>
</comment>
<comment type="similarity">
    <text evidence="1">Belongs to the sulfur carrier protein TusA family.</text>
</comment>
<name>TUSA_ECO57</name>
<organism>
    <name type="scientific">Escherichia coli O157:H7</name>
    <dbReference type="NCBI Taxonomy" id="83334"/>
    <lineage>
        <taxon>Bacteria</taxon>
        <taxon>Pseudomonadati</taxon>
        <taxon>Pseudomonadota</taxon>
        <taxon>Gammaproteobacteria</taxon>
        <taxon>Enterobacterales</taxon>
        <taxon>Enterobacteriaceae</taxon>
        <taxon>Escherichia</taxon>
    </lineage>
</organism>
<sequence length="81" mass="9095">MTDLFSSPDHTLDALGLRCPEPVMMVRKTVRNMQPGETLLIIADDPATTRDIPGFCTFMEHELVAKETDGLPYRYLIRKGG</sequence>
<accession>P0A892</accession>
<accession>P37618</accession>
<protein>
    <recommendedName>
        <fullName evidence="1">Sulfur carrier protein TusA</fullName>
    </recommendedName>
    <alternativeName>
        <fullName evidence="1">Sulfur mediator TusA</fullName>
    </alternativeName>
    <alternativeName>
        <fullName evidence="1">Sulfur transfer protein TusA</fullName>
    </alternativeName>
    <alternativeName>
        <fullName evidence="1">tRNA 2-thiouridine synthesizing protein A</fullName>
    </alternativeName>
</protein>
<keyword id="KW-0002">3D-structure</keyword>
<keyword id="KW-0963">Cytoplasm</keyword>
<keyword id="KW-1185">Reference proteome</keyword>
<keyword id="KW-0819">tRNA processing</keyword>
<proteinExistence type="evidence at protein level"/>
<gene>
    <name evidence="1" type="primary">tusA</name>
    <name type="ordered locus">Z4844</name>
    <name type="ordered locus">ECs4319</name>
</gene>
<evidence type="ECO:0000255" key="1">
    <source>
        <dbReference type="HAMAP-Rule" id="MF_00413"/>
    </source>
</evidence>
<evidence type="ECO:0000269" key="2">
    <source>
    </source>
</evidence>
<evidence type="ECO:0000305" key="3">
    <source>
    </source>
</evidence>
<evidence type="ECO:0007829" key="4">
    <source>
        <dbReference type="PDB" id="3LVJ"/>
    </source>
</evidence>